<keyword id="KW-1185">Reference proteome</keyword>
<keyword id="KW-0808">Transferase</keyword>
<dbReference type="EMBL" id="AF017113">
    <property type="protein sequence ID" value="AAC67268.1"/>
    <property type="molecule type" value="Genomic_DNA"/>
</dbReference>
<dbReference type="EMBL" id="AL009126">
    <property type="protein sequence ID" value="CAB15536.1"/>
    <property type="molecule type" value="Genomic_DNA"/>
</dbReference>
<dbReference type="PIR" id="A70043">
    <property type="entry name" value="A70043"/>
</dbReference>
<dbReference type="RefSeq" id="NP_391399.1">
    <property type="nucleotide sequence ID" value="NC_000964.3"/>
</dbReference>
<dbReference type="RefSeq" id="WP_003243243.1">
    <property type="nucleotide sequence ID" value="NZ_OZ025638.1"/>
</dbReference>
<dbReference type="SMR" id="O34796"/>
<dbReference type="FunCoup" id="O34796">
    <property type="interactions" value="139"/>
</dbReference>
<dbReference type="STRING" id="224308.BSU35190"/>
<dbReference type="PaxDb" id="224308-BSU35190"/>
<dbReference type="EnsemblBacteria" id="CAB15536">
    <property type="protein sequence ID" value="CAB15536"/>
    <property type="gene ID" value="BSU_35190"/>
</dbReference>
<dbReference type="GeneID" id="936657"/>
<dbReference type="KEGG" id="bsu:BSU35190"/>
<dbReference type="PATRIC" id="fig|224308.179.peg.3809"/>
<dbReference type="eggNOG" id="COG0574">
    <property type="taxonomic scope" value="Bacteria"/>
</dbReference>
<dbReference type="eggNOG" id="COG3848">
    <property type="taxonomic scope" value="Bacteria"/>
</dbReference>
<dbReference type="InParanoid" id="O34796"/>
<dbReference type="OrthoDB" id="9765468at2"/>
<dbReference type="PhylomeDB" id="O34796"/>
<dbReference type="BioCyc" id="BSUB:BSU35190-MONOMER"/>
<dbReference type="Proteomes" id="UP000001570">
    <property type="component" value="Chromosome"/>
</dbReference>
<dbReference type="GO" id="GO:0005524">
    <property type="term" value="F:ATP binding"/>
    <property type="evidence" value="ECO:0007669"/>
    <property type="project" value="InterPro"/>
</dbReference>
<dbReference type="GO" id="GO:0016301">
    <property type="term" value="F:kinase activity"/>
    <property type="evidence" value="ECO:0007669"/>
    <property type="project" value="InterPro"/>
</dbReference>
<dbReference type="Gene3D" id="3.30.1490.20">
    <property type="entry name" value="ATP-grasp fold, A domain"/>
    <property type="match status" value="1"/>
</dbReference>
<dbReference type="Gene3D" id="3.30.470.20">
    <property type="entry name" value="ATP-grasp fold, B domain"/>
    <property type="match status" value="1"/>
</dbReference>
<dbReference type="Gene3D" id="3.50.30.10">
    <property type="entry name" value="Phosphohistidine domain"/>
    <property type="match status" value="1"/>
</dbReference>
<dbReference type="InterPro" id="IPR013815">
    <property type="entry name" value="ATP_grasp_subdomain_1"/>
</dbReference>
<dbReference type="InterPro" id="IPR008279">
    <property type="entry name" value="PEP-util_enz_mobile_dom"/>
</dbReference>
<dbReference type="InterPro" id="IPR051549">
    <property type="entry name" value="PEP_Utilizing_Enz"/>
</dbReference>
<dbReference type="InterPro" id="IPR036637">
    <property type="entry name" value="Phosphohistidine_dom_sf"/>
</dbReference>
<dbReference type="InterPro" id="IPR002192">
    <property type="entry name" value="PPDK_AMP/ATP-bd"/>
</dbReference>
<dbReference type="PANTHER" id="PTHR43615">
    <property type="entry name" value="PHOSPHOENOLPYRUVATE SYNTHASE-RELATED"/>
    <property type="match status" value="1"/>
</dbReference>
<dbReference type="PANTHER" id="PTHR43615:SF1">
    <property type="entry name" value="PPDK_N DOMAIN-CONTAINING PROTEIN"/>
    <property type="match status" value="1"/>
</dbReference>
<dbReference type="Pfam" id="PF00391">
    <property type="entry name" value="PEP-utilizers"/>
    <property type="match status" value="1"/>
</dbReference>
<dbReference type="Pfam" id="PF01326">
    <property type="entry name" value="PPDK_N"/>
    <property type="match status" value="1"/>
</dbReference>
<dbReference type="SUPFAM" id="SSF56059">
    <property type="entry name" value="Glutathione synthetase ATP-binding domain-like"/>
    <property type="match status" value="1"/>
</dbReference>
<dbReference type="SUPFAM" id="SSF52009">
    <property type="entry name" value="Phosphohistidine domain"/>
    <property type="match status" value="1"/>
</dbReference>
<feature type="chain" id="PRO_0000378090" description="Uncharacterized phosphotransferase YvkC">
    <location>
        <begin position="1"/>
        <end position="831"/>
    </location>
</feature>
<feature type="active site" description="Tele-phosphohistidine intermediate" evidence="1">
    <location>
        <position position="787"/>
    </location>
</feature>
<reference key="1">
    <citation type="submission" date="1997-08" db="EMBL/GenBank/DDBJ databases">
        <title>Nucleotide sequence of the 300-304 chromosomal segment of Bacillus subtilis.</title>
        <authorList>
            <person name="Lazarevic V."/>
            <person name="Soldo B."/>
            <person name="Rivolta C."/>
            <person name="Reynolds S."/>
            <person name="Mauel C."/>
            <person name="Karamata D."/>
        </authorList>
    </citation>
    <scope>NUCLEOTIDE SEQUENCE [GENOMIC DNA]</scope>
</reference>
<reference key="2">
    <citation type="journal article" date="1997" name="Nature">
        <title>The complete genome sequence of the Gram-positive bacterium Bacillus subtilis.</title>
        <authorList>
            <person name="Kunst F."/>
            <person name="Ogasawara N."/>
            <person name="Moszer I."/>
            <person name="Albertini A.M."/>
            <person name="Alloni G."/>
            <person name="Azevedo V."/>
            <person name="Bertero M.G."/>
            <person name="Bessieres P."/>
            <person name="Bolotin A."/>
            <person name="Borchert S."/>
            <person name="Borriss R."/>
            <person name="Boursier L."/>
            <person name="Brans A."/>
            <person name="Braun M."/>
            <person name="Brignell S.C."/>
            <person name="Bron S."/>
            <person name="Brouillet S."/>
            <person name="Bruschi C.V."/>
            <person name="Caldwell B."/>
            <person name="Capuano V."/>
            <person name="Carter N.M."/>
            <person name="Choi S.-K."/>
            <person name="Codani J.-J."/>
            <person name="Connerton I.F."/>
            <person name="Cummings N.J."/>
            <person name="Daniel R.A."/>
            <person name="Denizot F."/>
            <person name="Devine K.M."/>
            <person name="Duesterhoeft A."/>
            <person name="Ehrlich S.D."/>
            <person name="Emmerson P.T."/>
            <person name="Entian K.-D."/>
            <person name="Errington J."/>
            <person name="Fabret C."/>
            <person name="Ferrari E."/>
            <person name="Foulger D."/>
            <person name="Fritz C."/>
            <person name="Fujita M."/>
            <person name="Fujita Y."/>
            <person name="Fuma S."/>
            <person name="Galizzi A."/>
            <person name="Galleron N."/>
            <person name="Ghim S.-Y."/>
            <person name="Glaser P."/>
            <person name="Goffeau A."/>
            <person name="Golightly E.J."/>
            <person name="Grandi G."/>
            <person name="Guiseppi G."/>
            <person name="Guy B.J."/>
            <person name="Haga K."/>
            <person name="Haiech J."/>
            <person name="Harwood C.R."/>
            <person name="Henaut A."/>
            <person name="Hilbert H."/>
            <person name="Holsappel S."/>
            <person name="Hosono S."/>
            <person name="Hullo M.-F."/>
            <person name="Itaya M."/>
            <person name="Jones L.-M."/>
            <person name="Joris B."/>
            <person name="Karamata D."/>
            <person name="Kasahara Y."/>
            <person name="Klaerr-Blanchard M."/>
            <person name="Klein C."/>
            <person name="Kobayashi Y."/>
            <person name="Koetter P."/>
            <person name="Koningstein G."/>
            <person name="Krogh S."/>
            <person name="Kumano M."/>
            <person name="Kurita K."/>
            <person name="Lapidus A."/>
            <person name="Lardinois S."/>
            <person name="Lauber J."/>
            <person name="Lazarevic V."/>
            <person name="Lee S.-M."/>
            <person name="Levine A."/>
            <person name="Liu H."/>
            <person name="Masuda S."/>
            <person name="Mauel C."/>
            <person name="Medigue C."/>
            <person name="Medina N."/>
            <person name="Mellado R.P."/>
            <person name="Mizuno M."/>
            <person name="Moestl D."/>
            <person name="Nakai S."/>
            <person name="Noback M."/>
            <person name="Noone D."/>
            <person name="O'Reilly M."/>
            <person name="Ogawa K."/>
            <person name="Ogiwara A."/>
            <person name="Oudega B."/>
            <person name="Park S.-H."/>
            <person name="Parro V."/>
            <person name="Pohl T.M."/>
            <person name="Portetelle D."/>
            <person name="Porwollik S."/>
            <person name="Prescott A.M."/>
            <person name="Presecan E."/>
            <person name="Pujic P."/>
            <person name="Purnelle B."/>
            <person name="Rapoport G."/>
            <person name="Rey M."/>
            <person name="Reynolds S."/>
            <person name="Rieger M."/>
            <person name="Rivolta C."/>
            <person name="Rocha E."/>
            <person name="Roche B."/>
            <person name="Rose M."/>
            <person name="Sadaie Y."/>
            <person name="Sato T."/>
            <person name="Scanlan E."/>
            <person name="Schleich S."/>
            <person name="Schroeter R."/>
            <person name="Scoffone F."/>
            <person name="Sekiguchi J."/>
            <person name="Sekowska A."/>
            <person name="Seror S.J."/>
            <person name="Serror P."/>
            <person name="Shin B.-S."/>
            <person name="Soldo B."/>
            <person name="Sorokin A."/>
            <person name="Tacconi E."/>
            <person name="Takagi T."/>
            <person name="Takahashi H."/>
            <person name="Takemaru K."/>
            <person name="Takeuchi M."/>
            <person name="Tamakoshi A."/>
            <person name="Tanaka T."/>
            <person name="Terpstra P."/>
            <person name="Tognoni A."/>
            <person name="Tosato V."/>
            <person name="Uchiyama S."/>
            <person name="Vandenbol M."/>
            <person name="Vannier F."/>
            <person name="Vassarotti A."/>
            <person name="Viari A."/>
            <person name="Wambutt R."/>
            <person name="Wedler E."/>
            <person name="Wedler H."/>
            <person name="Weitzenegger T."/>
            <person name="Winters P."/>
            <person name="Wipat A."/>
            <person name="Yamamoto H."/>
            <person name="Yamane K."/>
            <person name="Yasumoto K."/>
            <person name="Yata K."/>
            <person name="Yoshida K."/>
            <person name="Yoshikawa H.-F."/>
            <person name="Zumstein E."/>
            <person name="Yoshikawa H."/>
            <person name="Danchin A."/>
        </authorList>
    </citation>
    <scope>NUCLEOTIDE SEQUENCE [LARGE SCALE GENOMIC DNA]</scope>
    <source>
        <strain>168</strain>
    </source>
</reference>
<accession>O34796</accession>
<accession>Q795E1</accession>
<evidence type="ECO:0000255" key="1"/>
<evidence type="ECO:0000305" key="2"/>
<gene>
    <name type="primary">yvkC</name>
    <name type="ordered locus">BSU35190</name>
</gene>
<organism>
    <name type="scientific">Bacillus subtilis (strain 168)</name>
    <dbReference type="NCBI Taxonomy" id="224308"/>
    <lineage>
        <taxon>Bacteria</taxon>
        <taxon>Bacillati</taxon>
        <taxon>Bacillota</taxon>
        <taxon>Bacilli</taxon>
        <taxon>Bacillales</taxon>
        <taxon>Bacillaceae</taxon>
        <taxon>Bacillus</taxon>
    </lineage>
</organism>
<name>YVKC_BACSU</name>
<proteinExistence type="inferred from homology"/>
<comment type="similarity">
    <text evidence="2">Belongs to the PEP-utilizing enzyme family.</text>
</comment>
<sequence length="831" mass="94448">MYSVLFRQAEESSQLAGAKGMNLIKLTKHGLPVPDGFIIQTNALARFMEDNQLQETSENVEGGIISGTFSDELKDELTSSFYKLRESYRSVAVRSSSASEDLEGASFAGQYETYLNIKTEEEFLAKVKECWASFFSGRVSSYKKKMNNQIAEPLMGIVVQGLIDSEMSGVIFSRNPVTHDDRELLISASYGLGEAVVSGNVTPDTFIVNKSSFEIQKEIGAKEIYMESAAEGIAEKETSEDMRSRFCLTDEQVIELAEITKKTEDLYGYPVDIEFGIADHQIYLLQARPITTIDQDKKAAEEKRSFMITDTDMNDFWLNMESNIEGPVSPLFSSFIVPALEYGLKKSMQKFPIGVVVDEVKLYRGHIYSKNQGGQQPPSEDCGKELFPILSEHMYDIINHTYLPFYRTLDQLAQTEHTAESALEAFQKLKAFYLTAYEEHFNIVFPQILLTNKLQAMYQDIQGESENAHFYEMLTGKMNKSLETDRCLWLFSVEVQENPNLLAIFENNKPEQLQEKLEQTDEGRHFLKNVHEFLQEYGWRSVKSHDLIEQIWVENPYFALANIQNYVRNGYHFDNEFQKTKEKREKLYNEFLESIEDPGLRTEFDRYYQWTLNSANIKDDHHFYIDAMLDAKARIFLLKIGELLAENGVIQDREDLWFLYDDEVEQALLHPVSLQEKAEKRRQIFHEYELAQAPAYLGTPTKEQLKAAEEIVGAVIEDEKNTENHIFGIAASSGIATGPVKIIRDANEFSQFAPGDVLVCKMTTPLWTSLFQDAKAIITDTGGILSHAAIIAREYGIPAVLGTRTATERLRDGDIITVDGSSGKITVVSRS</sequence>
<protein>
    <recommendedName>
        <fullName>Uncharacterized phosphotransferase YvkC</fullName>
    </recommendedName>
</protein>